<accession>P08590</accession>
<accession>B2R534</accession>
<accession>Q9NRS8</accession>
<proteinExistence type="evidence at protein level"/>
<dbReference type="EMBL" id="M24122">
    <property type="protein sequence ID" value="AAA59895.1"/>
    <property type="molecule type" value="mRNA"/>
</dbReference>
<dbReference type="EMBL" id="X07373">
    <property type="protein sequence ID" value="CAA30292.1"/>
    <property type="molecule type" value="mRNA"/>
</dbReference>
<dbReference type="EMBL" id="M24247">
    <property type="protein sequence ID" value="AAA59851.1"/>
    <property type="molecule type" value="Genomic_DNA"/>
</dbReference>
<dbReference type="EMBL" id="M24242">
    <property type="protein sequence ID" value="AAA59851.1"/>
    <property type="status" value="JOINED"/>
    <property type="molecule type" value="Genomic_DNA"/>
</dbReference>
<dbReference type="EMBL" id="M24243">
    <property type="protein sequence ID" value="AAA59851.1"/>
    <property type="status" value="JOINED"/>
    <property type="molecule type" value="Genomic_DNA"/>
</dbReference>
<dbReference type="EMBL" id="M24244">
    <property type="protein sequence ID" value="AAA59851.1"/>
    <property type="status" value="JOINED"/>
    <property type="molecule type" value="Genomic_DNA"/>
</dbReference>
<dbReference type="EMBL" id="M24245">
    <property type="protein sequence ID" value="AAA59851.1"/>
    <property type="status" value="JOINED"/>
    <property type="molecule type" value="Genomic_DNA"/>
</dbReference>
<dbReference type="EMBL" id="M24246">
    <property type="protein sequence ID" value="AAA59851.1"/>
    <property type="status" value="JOINED"/>
    <property type="molecule type" value="Genomic_DNA"/>
</dbReference>
<dbReference type="EMBL" id="AF174483">
    <property type="protein sequence ID" value="AAF91089.1"/>
    <property type="molecule type" value="mRNA"/>
</dbReference>
<dbReference type="EMBL" id="AK312044">
    <property type="protein sequence ID" value="BAG34981.1"/>
    <property type="molecule type" value="mRNA"/>
</dbReference>
<dbReference type="EMBL" id="CH471055">
    <property type="protein sequence ID" value="EAW64791.1"/>
    <property type="molecule type" value="Genomic_DNA"/>
</dbReference>
<dbReference type="EMBL" id="BC009790">
    <property type="protein sequence ID" value="AAH09790.1"/>
    <property type="molecule type" value="mRNA"/>
</dbReference>
<dbReference type="CCDS" id="CCDS2746.1"/>
<dbReference type="PIR" id="B30881">
    <property type="entry name" value="MOHU3V"/>
</dbReference>
<dbReference type="RefSeq" id="NP_000249.1">
    <property type="nucleotide sequence ID" value="NM_000258.3"/>
</dbReference>
<dbReference type="RefSeq" id="NP_001393866.1">
    <property type="nucleotide sequence ID" value="NM_001406937.1"/>
</dbReference>
<dbReference type="RefSeq" id="NP_001393867.1">
    <property type="nucleotide sequence ID" value="NM_001406938.1"/>
</dbReference>
<dbReference type="RefSeq" id="NP_001393868.1">
    <property type="nucleotide sequence ID" value="NM_001406939.1"/>
</dbReference>
<dbReference type="PDB" id="5TBY">
    <property type="method" value="EM"/>
    <property type="resolution" value="20.00 A"/>
    <property type="chains" value="C/D=1-195"/>
</dbReference>
<dbReference type="PDB" id="8ACT">
    <property type="method" value="EM"/>
    <property type="resolution" value="3.60 A"/>
    <property type="chains" value="C/D=39-195"/>
</dbReference>
<dbReference type="PDB" id="8G4L">
    <property type="method" value="EM"/>
    <property type="resolution" value="6.40 A"/>
    <property type="chains" value="AE/AF/BE/BF/E/F/a/aa/ab/ag/ah/b/ba/bb/bg/bh/g/h=1-195"/>
</dbReference>
<dbReference type="PDBsum" id="5TBY"/>
<dbReference type="PDBsum" id="8ACT"/>
<dbReference type="PDBsum" id="8G4L"/>
<dbReference type="EMDB" id="EMD-15353"/>
<dbReference type="EMDB" id="EMD-29722"/>
<dbReference type="SMR" id="P08590"/>
<dbReference type="BioGRID" id="110718">
    <property type="interactions" value="25"/>
</dbReference>
<dbReference type="FunCoup" id="P08590">
    <property type="interactions" value="384"/>
</dbReference>
<dbReference type="IntAct" id="P08590">
    <property type="interactions" value="15"/>
</dbReference>
<dbReference type="MINT" id="P08590"/>
<dbReference type="STRING" id="9606.ENSP00000499406"/>
<dbReference type="ChEMBL" id="CHEMBL3831286"/>
<dbReference type="GlyGen" id="P08590">
    <property type="glycosylation" value="1 site, 1 O-linked glycan (1 site)"/>
</dbReference>
<dbReference type="iPTMnet" id="P08590"/>
<dbReference type="PhosphoSitePlus" id="P08590"/>
<dbReference type="SwissPalm" id="P08590"/>
<dbReference type="BioMuta" id="MYL3"/>
<dbReference type="DMDM" id="127149"/>
<dbReference type="jPOST" id="P08590"/>
<dbReference type="MassIVE" id="P08590"/>
<dbReference type="PaxDb" id="9606-ENSP00000379210"/>
<dbReference type="PeptideAtlas" id="P08590"/>
<dbReference type="ProteomicsDB" id="52134"/>
<dbReference type="Pumba" id="P08590"/>
<dbReference type="Antibodypedia" id="12839">
    <property type="antibodies" value="388 antibodies from 35 providers"/>
</dbReference>
<dbReference type="CPTC" id="P08590">
    <property type="antibodies" value="1 antibody"/>
</dbReference>
<dbReference type="DNASU" id="4634"/>
<dbReference type="Ensembl" id="ENST00000292327.6">
    <property type="protein sequence ID" value="ENSP00000292327.4"/>
    <property type="gene ID" value="ENSG00000160808.13"/>
</dbReference>
<dbReference type="Ensembl" id="ENST00000395869.5">
    <property type="protein sequence ID" value="ENSP00000379210.1"/>
    <property type="gene ID" value="ENSG00000160808.13"/>
</dbReference>
<dbReference type="Ensembl" id="ENST00000431168.2">
    <property type="protein sequence ID" value="ENSP00000393455.2"/>
    <property type="gene ID" value="ENSG00000160808.13"/>
</dbReference>
<dbReference type="Ensembl" id="ENST00000653454.1">
    <property type="protein sequence ID" value="ENSP00000499624.1"/>
    <property type="gene ID" value="ENSG00000160808.13"/>
</dbReference>
<dbReference type="Ensembl" id="ENST00000654597.1">
    <property type="protein sequence ID" value="ENSP00000499406.1"/>
    <property type="gene ID" value="ENSG00000160808.13"/>
</dbReference>
<dbReference type="Ensembl" id="ENST00000662933.1">
    <property type="protein sequence ID" value="ENSP00000499577.1"/>
    <property type="gene ID" value="ENSG00000160808.13"/>
</dbReference>
<dbReference type="Ensembl" id="ENST00000713932.1">
    <property type="protein sequence ID" value="ENSP00000519229.1"/>
    <property type="gene ID" value="ENSG00000160808.13"/>
</dbReference>
<dbReference type="Ensembl" id="ENST00000713933.1">
    <property type="protein sequence ID" value="ENSP00000519230.1"/>
    <property type="gene ID" value="ENSG00000160808.13"/>
</dbReference>
<dbReference type="GeneID" id="4634"/>
<dbReference type="KEGG" id="hsa:4634"/>
<dbReference type="MANE-Select" id="ENST00000292327.6">
    <property type="protein sequence ID" value="ENSP00000292327.4"/>
    <property type="RefSeq nucleotide sequence ID" value="NM_000258.3"/>
    <property type="RefSeq protein sequence ID" value="NP_000249.1"/>
</dbReference>
<dbReference type="UCSC" id="uc003cql.2">
    <property type="organism name" value="human"/>
</dbReference>
<dbReference type="AGR" id="HGNC:7584"/>
<dbReference type="CTD" id="4634"/>
<dbReference type="DisGeNET" id="4634"/>
<dbReference type="GeneCards" id="MYL3"/>
<dbReference type="GeneReviews" id="MYL3"/>
<dbReference type="HGNC" id="HGNC:7584">
    <property type="gene designation" value="MYL3"/>
</dbReference>
<dbReference type="HPA" id="ENSG00000160808">
    <property type="expression patterns" value="Tissue enhanced (heart muscle, skeletal muscle, tongue)"/>
</dbReference>
<dbReference type="MalaCards" id="MYL3"/>
<dbReference type="MIM" id="160790">
    <property type="type" value="gene"/>
</dbReference>
<dbReference type="MIM" id="608751">
    <property type="type" value="phenotype"/>
</dbReference>
<dbReference type="neXtProt" id="NX_P08590"/>
<dbReference type="OpenTargets" id="ENSG00000160808"/>
<dbReference type="PharmGKB" id="PA31381"/>
<dbReference type="VEuPathDB" id="HostDB:ENSG00000160808"/>
<dbReference type="eggNOG" id="KOG0030">
    <property type="taxonomic scope" value="Eukaryota"/>
</dbReference>
<dbReference type="GeneTree" id="ENSGT01030000234570"/>
<dbReference type="HOGENOM" id="CLU_061288_13_0_1"/>
<dbReference type="InParanoid" id="P08590"/>
<dbReference type="OMA" id="YDRTPKC"/>
<dbReference type="OrthoDB" id="5959761at2759"/>
<dbReference type="PAN-GO" id="P08590">
    <property type="GO annotations" value="5 GO annotations based on evolutionary models"/>
</dbReference>
<dbReference type="PhylomeDB" id="P08590"/>
<dbReference type="TreeFam" id="TF351553"/>
<dbReference type="PathwayCommons" id="P08590"/>
<dbReference type="Reactome" id="R-HSA-390522">
    <property type="pathway name" value="Striated Muscle Contraction"/>
</dbReference>
<dbReference type="SignaLink" id="P08590"/>
<dbReference type="SIGNOR" id="P08590"/>
<dbReference type="BioGRID-ORCS" id="4634">
    <property type="hits" value="17 hits in 1142 CRISPR screens"/>
</dbReference>
<dbReference type="ChiTaRS" id="MYL3">
    <property type="organism name" value="human"/>
</dbReference>
<dbReference type="GeneWiki" id="MYL3"/>
<dbReference type="GenomeRNAi" id="4634"/>
<dbReference type="Pharos" id="P08590">
    <property type="development level" value="Tbio"/>
</dbReference>
<dbReference type="PRO" id="PR:P08590"/>
<dbReference type="Proteomes" id="UP000005640">
    <property type="component" value="Chromosome 3"/>
</dbReference>
<dbReference type="RNAct" id="P08590">
    <property type="molecule type" value="protein"/>
</dbReference>
<dbReference type="Bgee" id="ENSG00000160808">
    <property type="expression patterns" value="Expressed in apex of heart and 125 other cell types or tissues"/>
</dbReference>
<dbReference type="ExpressionAtlas" id="P08590">
    <property type="expression patterns" value="baseline and differential"/>
</dbReference>
<dbReference type="GO" id="GO:0031672">
    <property type="term" value="C:A band"/>
    <property type="evidence" value="ECO:0000314"/>
    <property type="project" value="BHF-UCL"/>
</dbReference>
<dbReference type="GO" id="GO:0005829">
    <property type="term" value="C:cytosol"/>
    <property type="evidence" value="ECO:0000304"/>
    <property type="project" value="Reactome"/>
</dbReference>
<dbReference type="GO" id="GO:0031674">
    <property type="term" value="C:I band"/>
    <property type="evidence" value="ECO:0000314"/>
    <property type="project" value="BHF-UCL"/>
</dbReference>
<dbReference type="GO" id="GO:0005859">
    <property type="term" value="C:muscle myosin complex"/>
    <property type="evidence" value="ECO:0000304"/>
    <property type="project" value="ProtInc"/>
</dbReference>
<dbReference type="GO" id="GO:0016460">
    <property type="term" value="C:myosin II complex"/>
    <property type="evidence" value="ECO:0000318"/>
    <property type="project" value="GO_Central"/>
</dbReference>
<dbReference type="GO" id="GO:0030017">
    <property type="term" value="C:sarcomere"/>
    <property type="evidence" value="ECO:0000304"/>
    <property type="project" value="BHF-UCL"/>
</dbReference>
<dbReference type="GO" id="GO:0003785">
    <property type="term" value="F:actin monomer binding"/>
    <property type="evidence" value="ECO:0000314"/>
    <property type="project" value="BHF-UCL"/>
</dbReference>
<dbReference type="GO" id="GO:0005509">
    <property type="term" value="F:calcium ion binding"/>
    <property type="evidence" value="ECO:0007669"/>
    <property type="project" value="InterPro"/>
</dbReference>
<dbReference type="GO" id="GO:0003774">
    <property type="term" value="F:cytoskeletal motor activity"/>
    <property type="evidence" value="ECO:0007669"/>
    <property type="project" value="Ensembl"/>
</dbReference>
<dbReference type="GO" id="GO:0032038">
    <property type="term" value="F:myosin II heavy chain binding"/>
    <property type="evidence" value="ECO:0000303"/>
    <property type="project" value="BHF-UCL"/>
</dbReference>
<dbReference type="GO" id="GO:0008307">
    <property type="term" value="F:structural constituent of muscle"/>
    <property type="evidence" value="ECO:0000304"/>
    <property type="project" value="ProtInc"/>
</dbReference>
<dbReference type="GO" id="GO:0060048">
    <property type="term" value="P:cardiac muscle contraction"/>
    <property type="evidence" value="ECO:0000315"/>
    <property type="project" value="BHF-UCL"/>
</dbReference>
<dbReference type="GO" id="GO:0032781">
    <property type="term" value="P:positive regulation of ATP-dependent activity"/>
    <property type="evidence" value="ECO:0000250"/>
    <property type="project" value="BHF-UCL"/>
</dbReference>
<dbReference type="GO" id="GO:0006942">
    <property type="term" value="P:regulation of striated muscle contraction"/>
    <property type="evidence" value="ECO:0000315"/>
    <property type="project" value="BHF-UCL"/>
</dbReference>
<dbReference type="GO" id="GO:0002026">
    <property type="term" value="P:regulation of the force of heart contraction"/>
    <property type="evidence" value="ECO:0000315"/>
    <property type="project" value="BHF-UCL"/>
</dbReference>
<dbReference type="GO" id="GO:0007519">
    <property type="term" value="P:skeletal muscle tissue development"/>
    <property type="evidence" value="ECO:0007669"/>
    <property type="project" value="Ensembl"/>
</dbReference>
<dbReference type="GO" id="GO:0055010">
    <property type="term" value="P:ventricular cardiac muscle tissue morphogenesis"/>
    <property type="evidence" value="ECO:0000315"/>
    <property type="project" value="BHF-UCL"/>
</dbReference>
<dbReference type="CDD" id="cd00051">
    <property type="entry name" value="EFh"/>
    <property type="match status" value="1"/>
</dbReference>
<dbReference type="FunFam" id="1.10.238.10:FF:000019">
    <property type="entry name" value="Myosin light chain 1 skeletal"/>
    <property type="match status" value="1"/>
</dbReference>
<dbReference type="FunFam" id="1.10.238.10:FF:000056">
    <property type="entry name" value="Myosin light chain 1 skeletal"/>
    <property type="match status" value="1"/>
</dbReference>
<dbReference type="Gene3D" id="1.10.238.10">
    <property type="entry name" value="EF-hand"/>
    <property type="match status" value="2"/>
</dbReference>
<dbReference type="InterPro" id="IPR050230">
    <property type="entry name" value="CALM/Myosin/TropC-like"/>
</dbReference>
<dbReference type="InterPro" id="IPR011992">
    <property type="entry name" value="EF-hand-dom_pair"/>
</dbReference>
<dbReference type="InterPro" id="IPR002048">
    <property type="entry name" value="EF_hand_dom"/>
</dbReference>
<dbReference type="PANTHER" id="PTHR23048">
    <property type="entry name" value="MYOSIN LIGHT CHAIN 1, 3"/>
    <property type="match status" value="1"/>
</dbReference>
<dbReference type="PANTHER" id="PTHR23048:SF2">
    <property type="entry name" value="MYOSIN LIGHT CHAIN 3"/>
    <property type="match status" value="1"/>
</dbReference>
<dbReference type="SUPFAM" id="SSF47473">
    <property type="entry name" value="EF-hand"/>
    <property type="match status" value="1"/>
</dbReference>
<dbReference type="PROSITE" id="PS50222">
    <property type="entry name" value="EF_HAND_2"/>
    <property type="match status" value="3"/>
</dbReference>
<gene>
    <name evidence="16" type="primary">MYL3</name>
</gene>
<feature type="initiator methionine" description="Removed" evidence="2">
    <location>
        <position position="1"/>
    </location>
</feature>
<feature type="chain" id="PRO_0000198696" description="Myosin light chain 3">
    <location>
        <begin position="2"/>
        <end position="195"/>
    </location>
</feature>
<feature type="domain" description="EF-hand 1" evidence="4">
    <location>
        <begin position="49"/>
        <end position="86"/>
    </location>
</feature>
<feature type="domain" description="EF-hand 2" evidence="4">
    <location>
        <begin position="128"/>
        <end position="163"/>
    </location>
</feature>
<feature type="domain" description="EF-hand 3" evidence="4">
    <location>
        <begin position="163"/>
        <end position="195"/>
    </location>
</feature>
<feature type="region of interest" description="Disordered" evidence="5">
    <location>
        <begin position="1"/>
        <end position="37"/>
    </location>
</feature>
<feature type="compositionally biased region" description="Basic and acidic residues" evidence="5">
    <location>
        <begin position="1"/>
        <end position="15"/>
    </location>
</feature>
<feature type="compositionally biased region" description="Basic and acidic residues" evidence="5">
    <location>
        <begin position="28"/>
        <end position="37"/>
    </location>
</feature>
<feature type="modified residue" description="N,N,N-trimethylalanine" evidence="15">
    <location>
        <position position="2"/>
    </location>
</feature>
<feature type="modified residue" description="Phosphothreonine" evidence="3">
    <location>
        <position position="88"/>
    </location>
</feature>
<feature type="modified residue" description="Phosphothreonine" evidence="2">
    <location>
        <position position="127"/>
    </location>
</feature>
<feature type="modified residue" description="Phosphothreonine" evidence="3">
    <location>
        <position position="129"/>
    </location>
</feature>
<feature type="modified residue" description="Phosphotyrosine" evidence="3">
    <location>
        <position position="130"/>
    </location>
</feature>
<feature type="modified residue" description="Phosphoserine" evidence="2">
    <location>
        <position position="179"/>
    </location>
</feature>
<feature type="sequence variant" id="VAR_019842" description="In CMH8; dbSNP:rs199474702." evidence="7">
    <original>E</original>
    <variation>G</variation>
    <location>
        <position position="56"/>
    </location>
</feature>
<feature type="sequence variant" id="VAR_019843" description="In CMH8; autosomal recessive; dbSNP:rs104893750." evidence="6">
    <original>E</original>
    <variation>K</variation>
    <location>
        <position position="143"/>
    </location>
</feature>
<feature type="sequence variant" id="VAR_004599" description="In CMH8; with mid-left ventricular chamber thickening; dbSNP:rs104893748." evidence="9">
    <original>M</original>
    <variation>V</variation>
    <location>
        <position position="149"/>
    </location>
</feature>
<feature type="sequence variant" id="VAR_004600" description="In CMH8; with mid-left ventricular chamber thickening; dbSNP:rs104893749." evidence="9">
    <original>R</original>
    <variation>H</variation>
    <location>
        <position position="154"/>
    </location>
</feature>
<feature type="sequence variant" id="VAR_073726" description="In CMH8; dbSNP:rs193922391." evidence="8">
    <original>E</original>
    <variation>G</variation>
    <location>
        <position position="177"/>
    </location>
</feature>
<feature type="sequence conflict" description="In Ref. 5; AAF91089." evidence="14" ref="5">
    <original>K</original>
    <variation>R</variation>
    <location>
        <position position="171"/>
    </location>
</feature>
<keyword id="KW-0002">3D-structure</keyword>
<keyword id="KW-0122">Cardiomyopathy</keyword>
<keyword id="KW-0903">Direct protein sequencing</keyword>
<keyword id="KW-0225">Disease variant</keyword>
<keyword id="KW-0488">Methylation</keyword>
<keyword id="KW-0505">Motor protein</keyword>
<keyword id="KW-0514">Muscle protein</keyword>
<keyword id="KW-0518">Myosin</keyword>
<keyword id="KW-0597">Phosphoprotein</keyword>
<keyword id="KW-1267">Proteomics identification</keyword>
<keyword id="KW-1185">Reference proteome</keyword>
<keyword id="KW-0677">Repeat</keyword>
<protein>
    <recommendedName>
        <fullName evidence="14">Myosin light chain 3</fullName>
    </recommendedName>
    <alternativeName>
        <fullName evidence="13">Cardiac myosin light chain 1</fullName>
        <shortName evidence="13">CMLC1</shortName>
    </alternativeName>
    <alternativeName>
        <fullName evidence="14">Myosin light chain 1, slow-twitch muscle B/ventricular isoform</fullName>
        <shortName>MLC1SB</shortName>
    </alternativeName>
    <alternativeName>
        <fullName evidence="12">Ventricular myosin alkali light chain</fullName>
    </alternativeName>
    <alternativeName>
        <fullName evidence="11">Ventricular myosin light chain 1</fullName>
        <shortName evidence="11">VLCl</shortName>
    </alternativeName>
    <alternativeName>
        <fullName evidence="10">Ventricular/slow twitch myosin alkali light chain</fullName>
        <shortName evidence="10">MLC-lV/sb</shortName>
    </alternativeName>
</protein>
<evidence type="ECO:0000250" key="1"/>
<evidence type="ECO:0000250" key="2">
    <source>
        <dbReference type="UniProtKB" id="P09542"/>
    </source>
</evidence>
<evidence type="ECO:0000250" key="3">
    <source>
        <dbReference type="UniProtKB" id="P16409"/>
    </source>
</evidence>
<evidence type="ECO:0000255" key="4">
    <source>
        <dbReference type="PROSITE-ProRule" id="PRU00448"/>
    </source>
</evidence>
<evidence type="ECO:0000256" key="5">
    <source>
        <dbReference type="SAM" id="MobiDB-lite"/>
    </source>
</evidence>
<evidence type="ECO:0000269" key="6">
    <source>
    </source>
</evidence>
<evidence type="ECO:0000269" key="7">
    <source>
    </source>
</evidence>
<evidence type="ECO:0000269" key="8">
    <source>
    </source>
</evidence>
<evidence type="ECO:0000269" key="9">
    <source>
    </source>
</evidence>
<evidence type="ECO:0000303" key="10">
    <source>
    </source>
</evidence>
<evidence type="ECO:0000303" key="11">
    <source>
    </source>
</evidence>
<evidence type="ECO:0000303" key="12">
    <source>
    </source>
</evidence>
<evidence type="ECO:0000303" key="13">
    <source ref="5"/>
</evidence>
<evidence type="ECO:0000305" key="14"/>
<evidence type="ECO:0000305" key="15">
    <source>
    </source>
</evidence>
<evidence type="ECO:0000312" key="16">
    <source>
        <dbReference type="HGNC" id="HGNC:7584"/>
    </source>
</evidence>
<organism>
    <name type="scientific">Homo sapiens</name>
    <name type="common">Human</name>
    <dbReference type="NCBI Taxonomy" id="9606"/>
    <lineage>
        <taxon>Eukaryota</taxon>
        <taxon>Metazoa</taxon>
        <taxon>Chordata</taxon>
        <taxon>Craniata</taxon>
        <taxon>Vertebrata</taxon>
        <taxon>Euteleostomi</taxon>
        <taxon>Mammalia</taxon>
        <taxon>Eutheria</taxon>
        <taxon>Euarchontoglires</taxon>
        <taxon>Primates</taxon>
        <taxon>Haplorrhini</taxon>
        <taxon>Catarrhini</taxon>
        <taxon>Hominidae</taxon>
        <taxon>Homo</taxon>
    </lineage>
</organism>
<reference key="1">
    <citation type="journal article" date="1988" name="J. Biol. Chem.">
        <title>Molecular cloning and characterization of human atrial and ventricular myosin alkali light chain cDNA clones.</title>
        <authorList>
            <person name="Kurabayashi M."/>
            <person name="Komuro I."/>
            <person name="Tsuchimochi H."/>
            <person name="Takaku F."/>
            <person name="Yazaki Y."/>
        </authorList>
    </citation>
    <scope>NUCLEOTIDE SEQUENCE [MRNA]</scope>
</reference>
<reference key="2">
    <citation type="journal article" date="1988" name="Nucleic Acids Res.">
        <title>Molecular cloning and complete nucleotide sequence of a human ventricular myosin light chain 1.</title>
        <authorList>
            <person name="Hoffmann E."/>
            <person name="Shi Q.W."/>
            <person name="Floroff M."/>
            <person name="Mickle D.A.G."/>
            <person name="Wu T.-W."/>
            <person name="Olley P.M."/>
            <person name="Jackowski G."/>
        </authorList>
    </citation>
    <scope>NUCLEOTIDE SEQUENCE [MRNA]</scope>
</reference>
<reference key="3">
    <citation type="submission" date="1988-05" db="EMBL/GenBank/DDBJ databases">
        <authorList>
            <person name="Jackowski G."/>
        </authorList>
    </citation>
    <scope>SEQUENCE REVISION</scope>
</reference>
<reference key="4">
    <citation type="journal article" date="1989" name="J. Biol. Chem.">
        <title>Human ventricular/slow twitch myosin alkali light chain gene characterization, sequence, and chromosomal location.</title>
        <authorList>
            <person name="Fodor W.L."/>
            <person name="Darras B."/>
            <person name="Seharaseyon J."/>
            <person name="Falkenthal S."/>
            <person name="Francke U."/>
            <person name="Vanin E.F."/>
        </authorList>
    </citation>
    <scope>NUCLEOTIDE SEQUENCE [GENOMIC DNA]</scope>
</reference>
<reference key="5">
    <citation type="submission" date="1999-08" db="EMBL/GenBank/DDBJ databases">
        <title>The sequence of human cardiac myosin light chain I (CMLC-1) from a Chinese patient and the preparation of monoclonal antibody to CHCMLC1.</title>
        <authorList>
            <person name="Huang R."/>
            <person name="Peng B."/>
            <person name="Zhou G."/>
            <person name="Gong Z."/>
        </authorList>
    </citation>
    <scope>NUCLEOTIDE SEQUENCE [MRNA]</scope>
</reference>
<reference key="6">
    <citation type="journal article" date="2004" name="Nat. Genet.">
        <title>Complete sequencing and characterization of 21,243 full-length human cDNAs.</title>
        <authorList>
            <person name="Ota T."/>
            <person name="Suzuki Y."/>
            <person name="Nishikawa T."/>
            <person name="Otsuki T."/>
            <person name="Sugiyama T."/>
            <person name="Irie R."/>
            <person name="Wakamatsu A."/>
            <person name="Hayashi K."/>
            <person name="Sato H."/>
            <person name="Nagai K."/>
            <person name="Kimura K."/>
            <person name="Makita H."/>
            <person name="Sekine M."/>
            <person name="Obayashi M."/>
            <person name="Nishi T."/>
            <person name="Shibahara T."/>
            <person name="Tanaka T."/>
            <person name="Ishii S."/>
            <person name="Yamamoto J."/>
            <person name="Saito K."/>
            <person name="Kawai Y."/>
            <person name="Isono Y."/>
            <person name="Nakamura Y."/>
            <person name="Nagahari K."/>
            <person name="Murakami K."/>
            <person name="Yasuda T."/>
            <person name="Iwayanagi T."/>
            <person name="Wagatsuma M."/>
            <person name="Shiratori A."/>
            <person name="Sudo H."/>
            <person name="Hosoiri T."/>
            <person name="Kaku Y."/>
            <person name="Kodaira H."/>
            <person name="Kondo H."/>
            <person name="Sugawara M."/>
            <person name="Takahashi M."/>
            <person name="Kanda K."/>
            <person name="Yokoi T."/>
            <person name="Furuya T."/>
            <person name="Kikkawa E."/>
            <person name="Omura Y."/>
            <person name="Abe K."/>
            <person name="Kamihara K."/>
            <person name="Katsuta N."/>
            <person name="Sato K."/>
            <person name="Tanikawa M."/>
            <person name="Yamazaki M."/>
            <person name="Ninomiya K."/>
            <person name="Ishibashi T."/>
            <person name="Yamashita H."/>
            <person name="Murakawa K."/>
            <person name="Fujimori K."/>
            <person name="Tanai H."/>
            <person name="Kimata M."/>
            <person name="Watanabe M."/>
            <person name="Hiraoka S."/>
            <person name="Chiba Y."/>
            <person name="Ishida S."/>
            <person name="Ono Y."/>
            <person name="Takiguchi S."/>
            <person name="Watanabe S."/>
            <person name="Yosida M."/>
            <person name="Hotuta T."/>
            <person name="Kusano J."/>
            <person name="Kanehori K."/>
            <person name="Takahashi-Fujii A."/>
            <person name="Hara H."/>
            <person name="Tanase T.-O."/>
            <person name="Nomura Y."/>
            <person name="Togiya S."/>
            <person name="Komai F."/>
            <person name="Hara R."/>
            <person name="Takeuchi K."/>
            <person name="Arita M."/>
            <person name="Imose N."/>
            <person name="Musashino K."/>
            <person name="Yuuki H."/>
            <person name="Oshima A."/>
            <person name="Sasaki N."/>
            <person name="Aotsuka S."/>
            <person name="Yoshikawa Y."/>
            <person name="Matsunawa H."/>
            <person name="Ichihara T."/>
            <person name="Shiohata N."/>
            <person name="Sano S."/>
            <person name="Moriya S."/>
            <person name="Momiyama H."/>
            <person name="Satoh N."/>
            <person name="Takami S."/>
            <person name="Terashima Y."/>
            <person name="Suzuki O."/>
            <person name="Nakagawa S."/>
            <person name="Senoh A."/>
            <person name="Mizoguchi H."/>
            <person name="Goto Y."/>
            <person name="Shimizu F."/>
            <person name="Wakebe H."/>
            <person name="Hishigaki H."/>
            <person name="Watanabe T."/>
            <person name="Sugiyama A."/>
            <person name="Takemoto M."/>
            <person name="Kawakami B."/>
            <person name="Yamazaki M."/>
            <person name="Watanabe K."/>
            <person name="Kumagai A."/>
            <person name="Itakura S."/>
            <person name="Fukuzumi Y."/>
            <person name="Fujimori Y."/>
            <person name="Komiyama M."/>
            <person name="Tashiro H."/>
            <person name="Tanigami A."/>
            <person name="Fujiwara T."/>
            <person name="Ono T."/>
            <person name="Yamada K."/>
            <person name="Fujii Y."/>
            <person name="Ozaki K."/>
            <person name="Hirao M."/>
            <person name="Ohmori Y."/>
            <person name="Kawabata A."/>
            <person name="Hikiji T."/>
            <person name="Kobatake N."/>
            <person name="Inagaki H."/>
            <person name="Ikema Y."/>
            <person name="Okamoto S."/>
            <person name="Okitani R."/>
            <person name="Kawakami T."/>
            <person name="Noguchi S."/>
            <person name="Itoh T."/>
            <person name="Shigeta K."/>
            <person name="Senba T."/>
            <person name="Matsumura K."/>
            <person name="Nakajima Y."/>
            <person name="Mizuno T."/>
            <person name="Morinaga M."/>
            <person name="Sasaki M."/>
            <person name="Togashi T."/>
            <person name="Oyama M."/>
            <person name="Hata H."/>
            <person name="Watanabe M."/>
            <person name="Komatsu T."/>
            <person name="Mizushima-Sugano J."/>
            <person name="Satoh T."/>
            <person name="Shirai Y."/>
            <person name="Takahashi Y."/>
            <person name="Nakagawa K."/>
            <person name="Okumura K."/>
            <person name="Nagase T."/>
            <person name="Nomura N."/>
            <person name="Kikuchi H."/>
            <person name="Masuho Y."/>
            <person name="Yamashita R."/>
            <person name="Nakai K."/>
            <person name="Yada T."/>
            <person name="Nakamura Y."/>
            <person name="Ohara O."/>
            <person name="Isogai T."/>
            <person name="Sugano S."/>
        </authorList>
    </citation>
    <scope>NUCLEOTIDE SEQUENCE [LARGE SCALE MRNA]</scope>
    <source>
        <tissue>Skeletal muscle</tissue>
    </source>
</reference>
<reference key="7">
    <citation type="submission" date="2005-07" db="EMBL/GenBank/DDBJ databases">
        <authorList>
            <person name="Mural R.J."/>
            <person name="Istrail S."/>
            <person name="Sutton G.G."/>
            <person name="Florea L."/>
            <person name="Halpern A.L."/>
            <person name="Mobarry C.M."/>
            <person name="Lippert R."/>
            <person name="Walenz B."/>
            <person name="Shatkay H."/>
            <person name="Dew I."/>
            <person name="Miller J.R."/>
            <person name="Flanigan M.J."/>
            <person name="Edwards N.J."/>
            <person name="Bolanos R."/>
            <person name="Fasulo D."/>
            <person name="Halldorsson B.V."/>
            <person name="Hannenhalli S."/>
            <person name="Turner R."/>
            <person name="Yooseph S."/>
            <person name="Lu F."/>
            <person name="Nusskern D.R."/>
            <person name="Shue B.C."/>
            <person name="Zheng X.H."/>
            <person name="Zhong F."/>
            <person name="Delcher A.L."/>
            <person name="Huson D.H."/>
            <person name="Kravitz S.A."/>
            <person name="Mouchard L."/>
            <person name="Reinert K."/>
            <person name="Remington K.A."/>
            <person name="Clark A.G."/>
            <person name="Waterman M.S."/>
            <person name="Eichler E.E."/>
            <person name="Adams M.D."/>
            <person name="Hunkapiller M.W."/>
            <person name="Myers E.W."/>
            <person name="Venter J.C."/>
        </authorList>
    </citation>
    <scope>NUCLEOTIDE SEQUENCE [LARGE SCALE GENOMIC DNA]</scope>
</reference>
<reference key="8">
    <citation type="journal article" date="2004" name="Genome Res.">
        <title>The status, quality, and expansion of the NIH full-length cDNA project: the Mammalian Gene Collection (MGC).</title>
        <authorList>
            <consortium name="The MGC Project Team"/>
        </authorList>
    </citation>
    <scope>NUCLEOTIDE SEQUENCE [LARGE SCALE MRNA]</scope>
    <source>
        <tissue>Skeletal muscle</tissue>
    </source>
</reference>
<reference key="9">
    <citation type="journal article" date="1995" name="Electrophoresis">
        <title>The major protein expression profile and two-dimensional protein database of human heart.</title>
        <authorList>
            <person name="Kovalyov L.I."/>
            <person name="Shishkin S.S."/>
            <person name="Efimochkin A.S."/>
            <person name="Kovalyova M.A."/>
            <person name="Ershova E.S."/>
            <person name="Egorov T.A."/>
            <person name="Musalyamov A.K."/>
        </authorList>
    </citation>
    <scope>PROTEIN SEQUENCE OF 20-27; 34-40; 95-100; 124-129; 139-142 AND 155-171</scope>
    <source>
        <tissue>Heart</tissue>
    </source>
</reference>
<reference key="10">
    <citation type="journal article" date="1985" name="Eur. J. Biochem.">
        <title>The widespread distribution of alpha-N-trimethylalanine as the N-terminal amino acid of light chains from vertebrate striated muscle myosins.</title>
        <authorList>
            <person name="Henry G.D."/>
            <person name="Trayer I.P."/>
            <person name="Brewer S."/>
            <person name="Levine B.A."/>
        </authorList>
    </citation>
    <scope>METHYLATION AT ALA-2</scope>
</reference>
<reference key="11">
    <citation type="journal article" date="1996" name="Nat. Genet.">
        <title>Mutations in either the essential or regulatory light chains of myosin are associated with a rare myopathy in human heart and skeletal muscle.</title>
        <authorList>
            <person name="Poetter K."/>
            <person name="Jiang H."/>
            <person name="Hassanzadeh S."/>
            <person name="Master S.R."/>
            <person name="Chang A."/>
            <person name="Dalakas M.C."/>
            <person name="Rayment I."/>
            <person name="Sellers J.R."/>
            <person name="Fananapazir L."/>
            <person name="Epstein N.D."/>
        </authorList>
    </citation>
    <scope>VARIANTS CMH8 VAL-149 AND HIS-154</scope>
</reference>
<reference key="12">
    <citation type="journal article" date="2002" name="Circulation">
        <title>Myosin light chain mutation causes autosomal recessive cardiomyopathy with mid-cavitary hypertrophy and restrictive physiology.</title>
        <authorList>
            <person name="Olson T.M."/>
            <person name="Karst M.L."/>
            <person name="Whitby F.G."/>
            <person name="Driscoll D.J."/>
        </authorList>
    </citation>
    <scope>VARIANT CMH8 LYS-143</scope>
</reference>
<reference key="13">
    <citation type="journal article" date="2003" name="Circulation">
        <title>Hypertrophic cardiomyopathy: distribution of disease genes, spectrum of mutations, and implications for a molecular diagnosis strategy.</title>
        <authorList>
            <person name="Richard P."/>
            <person name="Charron P."/>
            <person name="Carrier L."/>
            <person name="Ledeuil C."/>
            <person name="Cheav T."/>
            <person name="Pichereau C."/>
            <person name="Benaiche A."/>
            <person name="Isnard R."/>
            <person name="Dubourg O."/>
            <person name="Burban M."/>
            <person name="Gueffet J.-P."/>
            <person name="Millaire A."/>
            <person name="Desnos M."/>
            <person name="Schwartz K."/>
            <person name="Hainque B."/>
            <person name="Komajda M."/>
        </authorList>
    </citation>
    <scope>VARIANT CMH8 GLY-56</scope>
</reference>
<reference key="14">
    <citation type="journal article" date="2004" name="Circulation">
        <authorList>
            <person name="Richard P."/>
            <person name="Charron P."/>
            <person name="Carrier L."/>
            <person name="Ledeuil C."/>
            <person name="Cheav T."/>
            <person name="Pichereau C."/>
            <person name="Benaiche A."/>
            <person name="Isnard R."/>
            <person name="Dubourg O."/>
            <person name="Burban M."/>
            <person name="Gueffet J.-P."/>
            <person name="Millaire A."/>
            <person name="Desnos M."/>
            <person name="Schwartz K."/>
            <person name="Hainque B."/>
            <person name="Komajda M."/>
        </authorList>
    </citation>
    <scope>ERRATUM OF PUBMED:12707239</scope>
</reference>
<reference key="15">
    <citation type="journal article" date="2013" name="Cardiology">
        <title>Infantile hypertrophic cardiomyopathy associated with a novel MYL3 mutation.</title>
        <authorList>
            <person name="Jay A."/>
            <person name="Chikarmane R."/>
            <person name="Poulik J."/>
            <person name="Misra V.K."/>
        </authorList>
    </citation>
    <scope>VARIANT CMH8 GLY-177</scope>
</reference>
<comment type="function">
    <text>Regulatory light chain of myosin. Does not bind calcium.</text>
</comment>
<comment type="subunit">
    <text>Myosin is a hexamer of 2 heavy chains and 4 light chains.</text>
</comment>
<comment type="PTM">
    <text>The N-terminus is blocked.</text>
</comment>
<comment type="PTM">
    <text evidence="1">N-terminus is methylated by METTL11A/NTM1.</text>
</comment>
<comment type="disease" evidence="6 7 8 9">
    <disease id="DI-00238">
        <name>Cardiomyopathy, familial hypertrophic, 8</name>
        <acronym>CMH8</acronym>
        <description>A hereditary heart disorder characterized by ventricular hypertrophy, which is usually asymmetric and often involves the interventricular septum. The symptoms include dyspnea, syncope, collapse, palpitations, and chest pain. They can be readily provoked by exercise. The disorder has inter- and intrafamilial variability ranging from benign to malignant forms with high risk of cardiac failure and sudden cardiac death. Rarely, patients present a variant of familial hypertrophic cardiomyopathy, characterized by mid-left ventricular chamber thickening.</description>
        <dbReference type="MIM" id="608751"/>
    </disease>
    <text>The disease is caused by variants affecting the gene represented in this entry.</text>
</comment>
<name>MYL3_HUMAN</name>
<sequence>MAPKKPEPKKDDAKAAPKAAPAPAPPPEPERPKEVEFDASKIKIEFTPEQIEEFKEAFMLFDRTPKCEMKITYGQCGDVLRALGQNPTQAEVLRVLGKPRQEELNTKMMDFETFLPMLQHISKNKDTGTYEDFVEGLRVFDKEGNGTVMGAELRHVLATLGERLTEDEVEKLMAGQEDSNGCINYEAFVKHIMSS</sequence>